<name>KAT6A_HUMAN</name>
<reference key="1">
    <citation type="journal article" date="1996" name="Nat. Genet.">
        <title>The translocation t(8;16)(p11;p13) of acute myeloid leukaemia fuses a putative acetyltransferase to the CREB-binding protein.</title>
        <authorList>
            <person name="Borrow J."/>
            <person name="Stanton V.P. Jr."/>
            <person name="Andresen J.M."/>
            <person name="Becher R."/>
            <person name="Behm F.G."/>
            <person name="Chaganti R.S.K."/>
            <person name="Civin C.I."/>
            <person name="Disteche C."/>
            <person name="Dube I."/>
            <person name="Frischauf A.M."/>
            <person name="Horsman D."/>
            <person name="Mitelman F."/>
            <person name="Volinia S."/>
            <person name="Watmore A.E."/>
            <person name="Housman D.E."/>
        </authorList>
    </citation>
    <scope>NUCLEOTIDE SEQUENCE [MRNA]</scope>
    <scope>CHROMOSOMAL TRANSLOCATION WITH CREBBP</scope>
</reference>
<reference key="2">
    <citation type="journal article" date="2006" name="Nature">
        <title>DNA sequence and analysis of human chromosome 8.</title>
        <authorList>
            <person name="Nusbaum C."/>
            <person name="Mikkelsen T.S."/>
            <person name="Zody M.C."/>
            <person name="Asakawa S."/>
            <person name="Taudien S."/>
            <person name="Garber M."/>
            <person name="Kodira C.D."/>
            <person name="Schueler M.G."/>
            <person name="Shimizu A."/>
            <person name="Whittaker C.A."/>
            <person name="Chang J.L."/>
            <person name="Cuomo C.A."/>
            <person name="Dewar K."/>
            <person name="FitzGerald M.G."/>
            <person name="Yang X."/>
            <person name="Allen N.R."/>
            <person name="Anderson S."/>
            <person name="Asakawa T."/>
            <person name="Blechschmidt K."/>
            <person name="Bloom T."/>
            <person name="Borowsky M.L."/>
            <person name="Butler J."/>
            <person name="Cook A."/>
            <person name="Corum B."/>
            <person name="DeArellano K."/>
            <person name="DeCaprio D."/>
            <person name="Dooley K.T."/>
            <person name="Dorris L. III"/>
            <person name="Engels R."/>
            <person name="Gloeckner G."/>
            <person name="Hafez N."/>
            <person name="Hagopian D.S."/>
            <person name="Hall J.L."/>
            <person name="Ishikawa S.K."/>
            <person name="Jaffe D.B."/>
            <person name="Kamat A."/>
            <person name="Kudoh J."/>
            <person name="Lehmann R."/>
            <person name="Lokitsang T."/>
            <person name="Macdonald P."/>
            <person name="Major J.E."/>
            <person name="Matthews C.D."/>
            <person name="Mauceli E."/>
            <person name="Menzel U."/>
            <person name="Mihalev A.H."/>
            <person name="Minoshima S."/>
            <person name="Murayama Y."/>
            <person name="Naylor J.W."/>
            <person name="Nicol R."/>
            <person name="Nguyen C."/>
            <person name="O'Leary S.B."/>
            <person name="O'Neill K."/>
            <person name="Parker S.C.J."/>
            <person name="Polley A."/>
            <person name="Raymond C.K."/>
            <person name="Reichwald K."/>
            <person name="Rodriguez J."/>
            <person name="Sasaki T."/>
            <person name="Schilhabel M."/>
            <person name="Siddiqui R."/>
            <person name="Smith C.L."/>
            <person name="Sneddon T.P."/>
            <person name="Talamas J.A."/>
            <person name="Tenzin P."/>
            <person name="Topham K."/>
            <person name="Venkataraman V."/>
            <person name="Wen G."/>
            <person name="Yamazaki S."/>
            <person name="Young S.K."/>
            <person name="Zeng Q."/>
            <person name="Zimmer A.R."/>
            <person name="Rosenthal A."/>
            <person name="Birren B.W."/>
            <person name="Platzer M."/>
            <person name="Shimizu N."/>
            <person name="Lander E.S."/>
        </authorList>
    </citation>
    <scope>NUCLEOTIDE SEQUENCE [LARGE SCALE GENOMIC DNA]</scope>
</reference>
<reference key="3">
    <citation type="submission" date="2002-04" db="EMBL/GenBank/DDBJ databases">
        <title>MOZ is fused to a novel Polycomb group gene in a therapy-related myelodysplastic syndrome with t(2;8)(p23;p11.2).</title>
        <authorList>
            <person name="Hosoda F."/>
            <person name="Kitabayashi I."/>
            <person name="Kakazu N."/>
            <person name="Fukushima M."/>
            <person name="Aikawa Y."/>
            <person name="Abe T."/>
            <person name="Hibi S."/>
            <person name="Yagi T."/>
            <person name="Ohki M."/>
        </authorList>
    </citation>
    <scope>NUCLEOTIDE SEQUENCE [MRNA] OF 1-813</scope>
    <scope>CHROMOSOMAL TRANSLOCATION WITH ASXL2</scope>
    <source>
        <tissue>Bone marrow</tissue>
    </source>
</reference>
<reference key="4">
    <citation type="journal article" date="1998" name="Blood">
        <title>A novel fusion between MOZ and the nuclear receptor coactivator TIF2 in acute myeloid leukemia.</title>
        <authorList>
            <person name="Carapeti M."/>
            <person name="Aguiar R.C.T."/>
            <person name="Goldman J.M."/>
            <person name="Cross N.C.P."/>
        </authorList>
    </citation>
    <scope>NUCLEOTIDE SEQUENCE [MRNA] OF 1089-1117</scope>
    <scope>CHROMOSOMAL TRANSLOCATION WITH NCOA2</scope>
</reference>
<reference key="5">
    <citation type="journal article" date="2000" name="Genes Chromosomes Cancer">
        <title>MOZ is fused to p300 in an acute monocytic leukemia with t(8;22).</title>
        <authorList>
            <person name="Chaffanet M."/>
            <person name="Gressin L."/>
            <person name="Preudhomme C."/>
            <person name="Soenen-Cornu V."/>
            <person name="Birnbaum D."/>
            <person name="Pebusque M.-J."/>
        </authorList>
    </citation>
    <scope>NUCLEOTIDE SEQUENCE [MRNA] OF 1111-1128</scope>
    <scope>CHROMOSOMAL TRANSLOCATION WITH EP300</scope>
</reference>
<reference key="6">
    <citation type="journal article" date="2001" name="EMBO J.">
        <title>Activation of AML1-mediated transcription by MOZ and inhibition by the MOZ-CBP fusion protein.</title>
        <authorList>
            <person name="Kitabayashi I."/>
            <person name="Aikawa Y."/>
            <person name="Nguyen L.A."/>
            <person name="Yokoyama A."/>
            <person name="Ohki M."/>
        </authorList>
    </citation>
    <scope>INTERACTION WITH RUNX1</scope>
    <scope>SUBCELLULAR LOCATION</scope>
    <scope>CATALYTIC ACTIVITY</scope>
    <scope>ACETYLATION</scope>
    <scope>CHROMOSOMAL TRANSLOCATION WITH CREBBP</scope>
    <scope>FUNCTION</scope>
</reference>
<reference key="7">
    <citation type="journal article" date="2001" name="Oncogene">
        <title>The monocytic leukemia zinc finger protein MOZ is a histone acetyltransferase.</title>
        <authorList>
            <person name="Champagne N."/>
            <person name="Pelletier N."/>
            <person name="Yang X.-J."/>
        </authorList>
    </citation>
    <scope>CATALYTIC ACTIVITY</scope>
    <scope>DOMAIN</scope>
</reference>
<reference key="8">
    <citation type="journal article" date="2002" name="Oncogene">
        <title>MOZ and MORF histone acetyltransferases interact with the Runt-domain transcription factor Runx2.</title>
        <authorList>
            <person name="Pelletier N."/>
            <person name="Champagne N."/>
            <person name="Stifani S."/>
            <person name="Yang X.-J."/>
        </authorList>
    </citation>
    <scope>INTERACTION WITH RUNX2</scope>
    <scope>FUNCTION</scope>
</reference>
<reference key="9">
    <citation type="journal article" date="2003" name="Cancer Cell">
        <title>MOZ-TIF2-induced acute myeloid leukemia requires the MOZ nucleosome binding motif and TIF2-mediated recruitment of CBP.</title>
        <authorList>
            <person name="Deguchi K."/>
            <person name="Ayton P.M."/>
            <person name="Carapeti M."/>
            <person name="Kutok J.L."/>
            <person name="Snyder C.S."/>
            <person name="Williams I.R."/>
            <person name="Cross N.C.P."/>
            <person name="Glass C.K."/>
            <person name="Cleary M.L."/>
            <person name="Gilliland D.G."/>
        </authorList>
    </citation>
    <scope>CHROMOSOMAL TRANSLOCATION WITH NCOA2</scope>
    <scope>MUTAGENESIS OF CYS-543 AND GLY-657</scope>
</reference>
<reference key="10">
    <citation type="journal article" date="2003" name="Nucleic Acids Res.">
        <title>Transcriptional regulation of the human MIP-1alpha promoter by RUNX1 and MOZ.</title>
        <authorList>
            <person name="Bristow C.A.P."/>
            <person name="Shore P."/>
        </authorList>
    </citation>
    <scope>FUNCTION</scope>
</reference>
<reference key="11">
    <citation type="journal article" date="2005" name="Mol. Cell. Biol.">
        <title>MOZ-TIF2 inhibits transcription by nuclear receptors and p53 by impairment of CBP function.</title>
        <authorList>
            <person name="Kindle K.B."/>
            <person name="Troke P.J.F."/>
            <person name="Collins H.M."/>
            <person name="Matsuda S."/>
            <person name="Bossi D."/>
            <person name="Bellodi C."/>
            <person name="Kalkhoven E."/>
            <person name="Salomoni P."/>
            <person name="Pelicci P.G."/>
            <person name="Minucci S."/>
            <person name="Heery D.M."/>
        </authorList>
    </citation>
    <scope>SUBCELLULAR LOCATION</scope>
    <scope>CHROMOSOMAL TRANSLOCATION WITH NCOA2</scope>
</reference>
<reference key="12">
    <citation type="journal article" date="2006" name="Mol. Cell">
        <title>ING tumor suppressor proteins are critical regulators of chromatin acetylation required for genome expression and perpetuation.</title>
        <authorList>
            <person name="Doyon Y."/>
            <person name="Cayrou C."/>
            <person name="Ullah M."/>
            <person name="Landry A.-J."/>
            <person name="Cote V."/>
            <person name="Selleck W."/>
            <person name="Lane W.S."/>
            <person name="Tan S."/>
            <person name="Yang X.-J."/>
            <person name="Cote J."/>
        </authorList>
    </citation>
    <scope>FUNCTION</scope>
    <scope>IDENTIFICATION IN THE MOZ/MORF COMPLEX</scope>
</reference>
<reference key="13">
    <citation type="journal article" date="2007" name="Science">
        <title>ATM and ATR substrate analysis reveals extensive protein networks responsive to DNA damage.</title>
        <authorList>
            <person name="Matsuoka S."/>
            <person name="Ballif B.A."/>
            <person name="Smogorzewska A."/>
            <person name="McDonald E.R. III"/>
            <person name="Hurov K.E."/>
            <person name="Luo J."/>
            <person name="Bakalarski C.E."/>
            <person name="Zhao Z."/>
            <person name="Solimini N."/>
            <person name="Lerenthal Y."/>
            <person name="Shiloh Y."/>
            <person name="Gygi S.P."/>
            <person name="Elledge S.J."/>
        </authorList>
    </citation>
    <scope>IDENTIFICATION BY MASS SPECTROMETRY [LARGE SCALE ANALYSIS]</scope>
    <source>
        <tissue>Embryonic kidney</tissue>
    </source>
</reference>
<reference key="14">
    <citation type="journal article" date="2008" name="Mol. Cell. Biol.">
        <title>Molecular architecture of quartet MOZ/MORF histone acetyltransferase complexes.</title>
        <authorList>
            <person name="Ullah M."/>
            <person name="Pelletier N."/>
            <person name="Xiao L."/>
            <person name="Zhao S.P."/>
            <person name="Wang K."/>
            <person name="Degerny C."/>
            <person name="Tahmasebi S."/>
            <person name="Cayrou C."/>
            <person name="Doyon Y."/>
            <person name="Goh S.-L."/>
            <person name="Champagne N."/>
            <person name="Cote J."/>
            <person name="Yang X.-J."/>
        </authorList>
    </citation>
    <scope>IDENTIFICATION IN THE MOZ/MORF COMPLEX</scope>
    <scope>INTERACTION WITH BRPF1</scope>
    <scope>SUBCELLULAR LOCATION</scope>
</reference>
<reference key="15">
    <citation type="journal article" date="2008" name="Proc. Natl. Acad. Sci. U.S.A.">
        <title>A quantitative atlas of mitotic phosphorylation.</title>
        <authorList>
            <person name="Dephoure N."/>
            <person name="Zhou C."/>
            <person name="Villen J."/>
            <person name="Beausoleil S.A."/>
            <person name="Bakalarski C.E."/>
            <person name="Elledge S.J."/>
            <person name="Gygi S.P."/>
        </authorList>
    </citation>
    <scope>PHOSPHORYLATION [LARGE SCALE ANALYSIS] AT SER-1113</scope>
    <scope>IDENTIFICATION BY MASS SPECTROMETRY [LARGE SCALE ANALYSIS]</scope>
    <source>
        <tissue>Cervix carcinoma</tissue>
    </source>
</reference>
<reference key="16">
    <citation type="journal article" date="2009" name="Sci. Signal.">
        <title>Quantitative phosphoproteomic analysis of T cell receptor signaling reveals system-wide modulation of protein-protein interactions.</title>
        <authorList>
            <person name="Mayya V."/>
            <person name="Lundgren D.H."/>
            <person name="Hwang S.-I."/>
            <person name="Rezaul K."/>
            <person name="Wu L."/>
            <person name="Eng J.K."/>
            <person name="Rodionov V."/>
            <person name="Han D.K."/>
        </authorList>
    </citation>
    <scope>PHOSPHORYLATION [LARGE SCALE ANALYSIS] AT SER-1113</scope>
    <scope>IDENTIFICATION BY MASS SPECTROMETRY [LARGE SCALE ANALYSIS]</scope>
    <source>
        <tissue>Leukemic T-cell</tissue>
    </source>
</reference>
<reference key="17">
    <citation type="journal article" date="2009" name="Science">
        <title>Lysine acetylation targets protein complexes and co-regulates major cellular functions.</title>
        <authorList>
            <person name="Choudhary C."/>
            <person name="Kumar C."/>
            <person name="Gnad F."/>
            <person name="Nielsen M.L."/>
            <person name="Rehman M."/>
            <person name="Walther T.C."/>
            <person name="Olsen J.V."/>
            <person name="Mann M."/>
        </authorList>
    </citation>
    <scope>ACETYLATION [LARGE SCALE ANALYSIS] AT LYS-350; LYS-355 AND LYS-1007</scope>
    <scope>IDENTIFICATION BY MASS SPECTROMETRY [LARGE SCALE ANALYSIS]</scope>
</reference>
<reference key="18">
    <citation type="journal article" date="2010" name="Sci. Signal.">
        <title>Quantitative phosphoproteomics reveals widespread full phosphorylation site occupancy during mitosis.</title>
        <authorList>
            <person name="Olsen J.V."/>
            <person name="Vermeulen M."/>
            <person name="Santamaria A."/>
            <person name="Kumar C."/>
            <person name="Miller M.L."/>
            <person name="Jensen L.J."/>
            <person name="Gnad F."/>
            <person name="Cox J."/>
            <person name="Jensen T.S."/>
            <person name="Nigg E.A."/>
            <person name="Brunak S."/>
            <person name="Mann M."/>
        </authorList>
    </citation>
    <scope>PHOSPHORYLATION [LARGE SCALE ANALYSIS] AT SER-473 AND SER-1113</scope>
    <scope>IDENTIFICATION BY MASS SPECTROMETRY [LARGE SCALE ANALYSIS]</scope>
    <source>
        <tissue>Cervix carcinoma</tissue>
    </source>
</reference>
<reference key="19">
    <citation type="journal article" date="2013" name="J. Proteome Res.">
        <title>Toward a comprehensive characterization of a human cancer cell phosphoproteome.</title>
        <authorList>
            <person name="Zhou H."/>
            <person name="Di Palma S."/>
            <person name="Preisinger C."/>
            <person name="Peng M."/>
            <person name="Polat A.N."/>
            <person name="Heck A.J."/>
            <person name="Mohammed S."/>
        </authorList>
    </citation>
    <scope>PHOSPHORYLATION [LARGE SCALE ANALYSIS] AT SER-420; SER-473; SER-812; SER-941; SER-954; SER-974; SER-1089; SER-1090 AND SER-1113</scope>
    <scope>IDENTIFICATION BY MASS SPECTROMETRY [LARGE SCALE ANALYSIS]</scope>
    <source>
        <tissue>Cervix carcinoma</tissue>
        <tissue>Erythroleukemia</tissue>
    </source>
</reference>
<reference key="20">
    <citation type="journal article" date="2013" name="Proc. Natl. Acad. Sci. U.S.A.">
        <title>MOZ increases p53 acetylation and premature senescence through its complex formation with PML.</title>
        <authorList>
            <person name="Rokudai S."/>
            <person name="Laptenko O."/>
            <person name="Arnal S.M."/>
            <person name="Taya Y."/>
            <person name="Kitabayashi I."/>
            <person name="Prives C."/>
        </authorList>
    </citation>
    <scope>FUNCTION</scope>
    <scope>INTERACTION WITH PML AND TP53</scope>
    <scope>PHOSPHORYLATION AT THR-369</scope>
</reference>
<reference key="21">
    <citation type="journal article" date="2014" name="J. Proteomics">
        <title>An enzyme assisted RP-RPLC approach for in-depth analysis of human liver phosphoproteome.</title>
        <authorList>
            <person name="Bian Y."/>
            <person name="Song C."/>
            <person name="Cheng K."/>
            <person name="Dong M."/>
            <person name="Wang F."/>
            <person name="Huang J."/>
            <person name="Sun D."/>
            <person name="Wang L."/>
            <person name="Ye M."/>
            <person name="Zou H."/>
        </authorList>
    </citation>
    <scope>IDENTIFICATION BY MASS SPECTROMETRY [LARGE SCALE ANALYSIS]</scope>
    <source>
        <tissue>Liver</tissue>
    </source>
</reference>
<reference key="22">
    <citation type="journal article" date="2015" name="Am. J. Hum. Genet.">
        <title>De novo nonsense mutations in KAT6A, a lysine acetyl-transferase gene, cause a syndrome including microcephaly and global developmental delay.</title>
        <authorList>
            <consortium name="UCLA Clinical Genomics Center"/>
            <person name="Arboleda V.A."/>
            <person name="Lee H."/>
            <person name="Dorrani N."/>
            <person name="Zadeh N."/>
            <person name="Willis M."/>
            <person name="Macmurdo C.F."/>
            <person name="Manning M.A."/>
            <person name="Kwan A."/>
            <person name="Hudgins L."/>
            <person name="Barthelemy F."/>
            <person name="Miceli M.C."/>
            <person name="Quintero-Rivera F."/>
            <person name="Kantarci S."/>
            <person name="Strom S.P."/>
            <person name="Deignan J.L."/>
            <person name="Grody W.W."/>
            <person name="Vilain E."/>
            <person name="Nelson S.F."/>
        </authorList>
    </citation>
    <scope>INVOLVEMENT IN ARTHS</scope>
</reference>
<reference key="23">
    <citation type="journal article" date="2015" name="Am. J. Hum. Genet.">
        <title>Dominant mutations in KAT6A cause intellectual disability with recognizable syndromic features.</title>
        <authorList>
            <person name="Tham E."/>
            <person name="Lindstrand A."/>
            <person name="Santani A."/>
            <person name="Malmgren H."/>
            <person name="Nesbitt A."/>
            <person name="Dubbs H.A."/>
            <person name="Zackai E.H."/>
            <person name="Parker M.J."/>
            <person name="Millan F."/>
            <person name="Rosenbaum K."/>
            <person name="Wilson G.N."/>
            <person name="Nordgren A."/>
        </authorList>
    </citation>
    <scope>INVOLVEMENT IN ARTHS</scope>
</reference>
<reference key="24">
    <citation type="journal article" date="2017" name="Nat. Struct. Mol. Biol.">
        <title>Site-specific mapping of the human SUMO proteome reveals co-modification with phosphorylation.</title>
        <authorList>
            <person name="Hendriks I.A."/>
            <person name="Lyon D."/>
            <person name="Young C."/>
            <person name="Jensen L.J."/>
            <person name="Vertegaal A.C."/>
            <person name="Nielsen M.L."/>
        </authorList>
    </citation>
    <scope>SUMOYLATION [LARGE SCALE ANALYSIS] AT LYS-834 AND LYS-1342</scope>
    <scope>IDENTIFICATION BY MASS SPECTROMETRY [LARGE SCALE ANALYSIS]</scope>
</reference>
<reference key="25">
    <citation type="submission" date="2002-06" db="PDB data bank">
        <title>Solution structure of a CCCCCHC zinc finger from MOZ.</title>
        <authorList>
            <person name="Kwan A.H.Y."/>
            <person name="Gell D.A."/>
            <person name="Liew C.K."/>
            <person name="Mackay J.P."/>
        </authorList>
    </citation>
    <scope>STRUCTURE BY NMR OF 531-563</scope>
</reference>
<reference key="26">
    <citation type="journal article" date="2007" name="J. Biol. Chem.">
        <title>The human monocytic leukemia zinc finger histone acetyltransferase domain contains DNA-binding activity implicated in chromatin targeting.</title>
        <authorList>
            <person name="Holbert M.A."/>
            <person name="Sikorski T."/>
            <person name="Carten J."/>
            <person name="Snowflack D."/>
            <person name="Hodawadekar S."/>
            <person name="Marmorstein R."/>
        </authorList>
    </citation>
    <scope>X-RAY CRYSTALLOGRAPHY (3.0 ANGSTROMS) OF 501-784 IN COMPLEXES WITH ACETYL-COA; HISTONE H3 AND HISTONE H4 AND ZINC IONS</scope>
    <scope>FUNCTION</scope>
    <scope>CATALYTIC ACTIVITY</scope>
    <scope>DNA-BINDING</scope>
    <scope>MUTAGENESIS OF LYS-545; ILE-727 AND HIS-732</scope>
</reference>
<reference key="27">
    <citation type="submission" date="2009-02" db="PDB data bank">
        <title>The crystal structure of human MYST histone acetyltransferase 3 in complex with acetylcoenzyme A.</title>
        <authorList>
            <consortium name="Structural genomics consortium (SGC)"/>
        </authorList>
    </citation>
    <scope>X-RAY CRYSTALLOGRAPHY (2.3 ANGSTROMS) OF 497-780 IN COMPLEX WITH ACETYL-COA</scope>
    <scope>ACETYLATION AT LYS-604</scope>
</reference>
<dbReference type="EC" id="2.3.1.48" evidence="10 11"/>
<dbReference type="EMBL" id="U47742">
    <property type="protein sequence ID" value="AAC50662.1"/>
    <property type="molecule type" value="mRNA"/>
</dbReference>
<dbReference type="EMBL" id="AC090571">
    <property type="status" value="NOT_ANNOTATED_CDS"/>
    <property type="molecule type" value="Genomic_DNA"/>
</dbReference>
<dbReference type="EMBL" id="AB084281">
    <property type="protein sequence ID" value="BAD00088.1"/>
    <property type="status" value="ALT_TERM"/>
    <property type="molecule type" value="mRNA"/>
</dbReference>
<dbReference type="CCDS" id="CCDS6124.1"/>
<dbReference type="RefSeq" id="NP_006757.2">
    <property type="nucleotide sequence ID" value="NM_006766.5"/>
</dbReference>
<dbReference type="RefSeq" id="XP_016869352.1">
    <property type="nucleotide sequence ID" value="XM_017013863.1"/>
</dbReference>
<dbReference type="RefSeq" id="XP_016869353.1">
    <property type="nucleotide sequence ID" value="XM_017013864.1"/>
</dbReference>
<dbReference type="PDB" id="1M36">
    <property type="method" value="NMR"/>
    <property type="chains" value="A=533-563"/>
</dbReference>
<dbReference type="PDB" id="2LN0">
    <property type="method" value="NMR"/>
    <property type="chains" value="A=204-313"/>
</dbReference>
<dbReference type="PDB" id="2OZU">
    <property type="method" value="X-ray"/>
    <property type="resolution" value="2.30 A"/>
    <property type="chains" value="A=497-780"/>
</dbReference>
<dbReference type="PDB" id="2RC4">
    <property type="method" value="X-ray"/>
    <property type="resolution" value="3.00 A"/>
    <property type="chains" value="A=501-784"/>
</dbReference>
<dbReference type="PDB" id="3V43">
    <property type="method" value="X-ray"/>
    <property type="resolution" value="1.47 A"/>
    <property type="chains" value="A=204-313"/>
</dbReference>
<dbReference type="PDB" id="4LJN">
    <property type="method" value="X-ray"/>
    <property type="resolution" value="3.00 A"/>
    <property type="chains" value="A=194-323"/>
</dbReference>
<dbReference type="PDB" id="4LK9">
    <property type="method" value="X-ray"/>
    <property type="resolution" value="1.60 A"/>
    <property type="chains" value="A=194-323"/>
</dbReference>
<dbReference type="PDB" id="4LKA">
    <property type="method" value="X-ray"/>
    <property type="resolution" value="1.61 A"/>
    <property type="chains" value="A=194-323"/>
</dbReference>
<dbReference type="PDB" id="4LLB">
    <property type="method" value="X-ray"/>
    <property type="resolution" value="2.50 A"/>
    <property type="chains" value="A/B=194-323"/>
</dbReference>
<dbReference type="PDB" id="5B75">
    <property type="method" value="X-ray"/>
    <property type="resolution" value="1.70 A"/>
    <property type="chains" value="A=194-323"/>
</dbReference>
<dbReference type="PDB" id="5B76">
    <property type="method" value="X-ray"/>
    <property type="resolution" value="1.65 A"/>
    <property type="chains" value="A=194-323"/>
</dbReference>
<dbReference type="PDB" id="5B77">
    <property type="method" value="X-ray"/>
    <property type="resolution" value="1.55 A"/>
    <property type="chains" value="A=194-323"/>
</dbReference>
<dbReference type="PDB" id="5B78">
    <property type="method" value="X-ray"/>
    <property type="resolution" value="1.40 A"/>
    <property type="chains" value="A=194-323"/>
</dbReference>
<dbReference type="PDB" id="6LSB">
    <property type="method" value="X-ray"/>
    <property type="resolution" value="2.00 A"/>
    <property type="chains" value="A=194-323"/>
</dbReference>
<dbReference type="PDB" id="7Y43">
    <property type="method" value="X-ray"/>
    <property type="resolution" value="1.50 A"/>
    <property type="chains" value="A=1-85"/>
</dbReference>
<dbReference type="PDB" id="8DD5">
    <property type="method" value="X-ray"/>
    <property type="resolution" value="2.58 A"/>
    <property type="chains" value="A=501-784"/>
</dbReference>
<dbReference type="PDB" id="8H7A">
    <property type="method" value="X-ray"/>
    <property type="resolution" value="1.92 A"/>
    <property type="chains" value="A/B/E/F=1-85"/>
</dbReference>
<dbReference type="PDB" id="9ARR">
    <property type="method" value="X-ray"/>
    <property type="resolution" value="2.10 A"/>
    <property type="chains" value="C=1005-1017"/>
</dbReference>
<dbReference type="PDB" id="9DZN">
    <property type="method" value="X-ray"/>
    <property type="resolution" value="1.72 A"/>
    <property type="chains" value="A=501-784"/>
</dbReference>
<dbReference type="PDB" id="9FKR">
    <property type="method" value="X-ray"/>
    <property type="resolution" value="2.69 A"/>
    <property type="chains" value="A/B=509-778"/>
</dbReference>
<dbReference type="PDBsum" id="1M36"/>
<dbReference type="PDBsum" id="2LN0"/>
<dbReference type="PDBsum" id="2OZU"/>
<dbReference type="PDBsum" id="2RC4"/>
<dbReference type="PDBsum" id="3V43"/>
<dbReference type="PDBsum" id="4LJN"/>
<dbReference type="PDBsum" id="4LK9"/>
<dbReference type="PDBsum" id="4LKA"/>
<dbReference type="PDBsum" id="4LLB"/>
<dbReference type="PDBsum" id="5B75"/>
<dbReference type="PDBsum" id="5B76"/>
<dbReference type="PDBsum" id="5B77"/>
<dbReference type="PDBsum" id="5B78"/>
<dbReference type="PDBsum" id="6LSB"/>
<dbReference type="PDBsum" id="7Y43"/>
<dbReference type="PDBsum" id="8DD5"/>
<dbReference type="PDBsum" id="8H7A"/>
<dbReference type="PDBsum" id="9ARR"/>
<dbReference type="PDBsum" id="9DZN"/>
<dbReference type="PDBsum" id="9FKR"/>
<dbReference type="BMRB" id="Q92794"/>
<dbReference type="SMR" id="Q92794"/>
<dbReference type="BioGRID" id="113703">
    <property type="interactions" value="513"/>
</dbReference>
<dbReference type="ComplexPortal" id="CPX-727">
    <property type="entry name" value="MOZ1 histone acetyltransferase complex"/>
</dbReference>
<dbReference type="ComplexPortal" id="CPX-733">
    <property type="entry name" value="MOZ2 histone acetyltransferase complex"/>
</dbReference>
<dbReference type="ComplexPortal" id="CPX-736">
    <property type="entry name" value="MOZ3 histone acetyltransferase complex"/>
</dbReference>
<dbReference type="CORUM" id="Q92794"/>
<dbReference type="FunCoup" id="Q92794">
    <property type="interactions" value="3722"/>
</dbReference>
<dbReference type="IntAct" id="Q92794">
    <property type="interactions" value="43"/>
</dbReference>
<dbReference type="MINT" id="Q92794"/>
<dbReference type="STRING" id="9606.ENSP00000265713"/>
<dbReference type="BindingDB" id="Q92794"/>
<dbReference type="ChEMBL" id="CHEMBL3774298"/>
<dbReference type="GuidetoPHARMACOLOGY" id="2665"/>
<dbReference type="GlyCosmos" id="Q92794">
    <property type="glycosylation" value="4 sites, 1 glycan"/>
</dbReference>
<dbReference type="GlyGen" id="Q92794">
    <property type="glycosylation" value="6 sites, 1 O-linked glycan (5 sites)"/>
</dbReference>
<dbReference type="iPTMnet" id="Q92794"/>
<dbReference type="PhosphoSitePlus" id="Q92794"/>
<dbReference type="SwissPalm" id="Q92794"/>
<dbReference type="BioMuta" id="KAT6A"/>
<dbReference type="DMDM" id="215274095"/>
<dbReference type="jPOST" id="Q92794"/>
<dbReference type="MassIVE" id="Q92794"/>
<dbReference type="PaxDb" id="9606-ENSP00000380136"/>
<dbReference type="PeptideAtlas" id="Q92794"/>
<dbReference type="ProteomicsDB" id="75473"/>
<dbReference type="Pumba" id="Q92794"/>
<dbReference type="Antibodypedia" id="23986">
    <property type="antibodies" value="138 antibodies from 29 providers"/>
</dbReference>
<dbReference type="DNASU" id="7994"/>
<dbReference type="Ensembl" id="ENST00000265713.8">
    <property type="protein sequence ID" value="ENSP00000265713.2"/>
    <property type="gene ID" value="ENSG00000083168.11"/>
</dbReference>
<dbReference type="Ensembl" id="ENST00000396930.4">
    <property type="protein sequence ID" value="ENSP00000380136.3"/>
    <property type="gene ID" value="ENSG00000083168.11"/>
</dbReference>
<dbReference type="GeneID" id="7994"/>
<dbReference type="KEGG" id="hsa:7994"/>
<dbReference type="MANE-Select" id="ENST00000265713.8">
    <property type="protein sequence ID" value="ENSP00000265713.2"/>
    <property type="RefSeq nucleotide sequence ID" value="NM_006766.5"/>
    <property type="RefSeq protein sequence ID" value="NP_006757.2"/>
</dbReference>
<dbReference type="UCSC" id="uc003xon.4">
    <property type="organism name" value="human"/>
</dbReference>
<dbReference type="AGR" id="HGNC:13013"/>
<dbReference type="CTD" id="7994"/>
<dbReference type="DisGeNET" id="7994"/>
<dbReference type="GeneCards" id="KAT6A"/>
<dbReference type="HGNC" id="HGNC:13013">
    <property type="gene designation" value="KAT6A"/>
</dbReference>
<dbReference type="HPA" id="ENSG00000083168">
    <property type="expression patterns" value="Low tissue specificity"/>
</dbReference>
<dbReference type="MalaCards" id="KAT6A"/>
<dbReference type="MIM" id="601408">
    <property type="type" value="gene"/>
</dbReference>
<dbReference type="MIM" id="616268">
    <property type="type" value="phenotype"/>
</dbReference>
<dbReference type="neXtProt" id="NX_Q92794"/>
<dbReference type="OpenTargets" id="ENSG00000083168"/>
<dbReference type="Orphanet" id="370026">
    <property type="disease" value="Acute myeloid leukemia with t(8;16)(p11;p13) translocation"/>
</dbReference>
<dbReference type="Orphanet" id="457193">
    <property type="disease" value="KAT6-related intellectual disability-craniofacial anomalies-cardiac defects syndrome"/>
</dbReference>
<dbReference type="PharmGKB" id="PA37592"/>
<dbReference type="VEuPathDB" id="HostDB:ENSG00000083168"/>
<dbReference type="eggNOG" id="KOG2747">
    <property type="taxonomic scope" value="Eukaryota"/>
</dbReference>
<dbReference type="GeneTree" id="ENSGT00940000156962"/>
<dbReference type="HOGENOM" id="CLU_001232_0_1_1"/>
<dbReference type="InParanoid" id="Q92794"/>
<dbReference type="OrthoDB" id="787137at2759"/>
<dbReference type="PAN-GO" id="Q92794">
    <property type="GO annotations" value="7 GO annotations based on evolutionary models"/>
</dbReference>
<dbReference type="PhylomeDB" id="Q92794"/>
<dbReference type="TreeFam" id="TF106483"/>
<dbReference type="BRENDA" id="2.3.1.48">
    <property type="organism ID" value="2681"/>
</dbReference>
<dbReference type="PathwayCommons" id="Q92794"/>
<dbReference type="Reactome" id="R-HSA-3214847">
    <property type="pathway name" value="HATs acetylate histones"/>
</dbReference>
<dbReference type="Reactome" id="R-HSA-6804758">
    <property type="pathway name" value="Regulation of TP53 Activity through Acetylation"/>
</dbReference>
<dbReference type="SignaLink" id="Q92794"/>
<dbReference type="SIGNOR" id="Q92794"/>
<dbReference type="BioGRID-ORCS" id="7994">
    <property type="hits" value="84 hits in 1100 CRISPR screens"/>
</dbReference>
<dbReference type="CD-CODE" id="B5B9A610">
    <property type="entry name" value="PML body"/>
</dbReference>
<dbReference type="ChiTaRS" id="KAT6A">
    <property type="organism name" value="human"/>
</dbReference>
<dbReference type="EvolutionaryTrace" id="Q92794"/>
<dbReference type="GeneWiki" id="MYST3"/>
<dbReference type="GenomeRNAi" id="7994"/>
<dbReference type="Pharos" id="Q92794">
    <property type="development level" value="Tchem"/>
</dbReference>
<dbReference type="PRO" id="PR:Q92794"/>
<dbReference type="Proteomes" id="UP000005640">
    <property type="component" value="Chromosome 8"/>
</dbReference>
<dbReference type="RNAct" id="Q92794">
    <property type="molecule type" value="protein"/>
</dbReference>
<dbReference type="Bgee" id="ENSG00000083168">
    <property type="expression patterns" value="Expressed in nipple and 220 other cell types or tissues"/>
</dbReference>
<dbReference type="ExpressionAtlas" id="Q92794">
    <property type="expression patterns" value="baseline and differential"/>
</dbReference>
<dbReference type="GO" id="GO:0000785">
    <property type="term" value="C:chromatin"/>
    <property type="evidence" value="ECO:0000318"/>
    <property type="project" value="GO_Central"/>
</dbReference>
<dbReference type="GO" id="GO:0005829">
    <property type="term" value="C:cytosol"/>
    <property type="evidence" value="ECO:0000314"/>
    <property type="project" value="HPA"/>
</dbReference>
<dbReference type="GO" id="GO:0070776">
    <property type="term" value="C:MOZ/MORF histone acetyltransferase complex"/>
    <property type="evidence" value="ECO:0000314"/>
    <property type="project" value="UniProtKB"/>
</dbReference>
<dbReference type="GO" id="GO:0016607">
    <property type="term" value="C:nuclear speck"/>
    <property type="evidence" value="ECO:0000314"/>
    <property type="project" value="HPA"/>
</dbReference>
<dbReference type="GO" id="GO:0005730">
    <property type="term" value="C:nucleolus"/>
    <property type="evidence" value="ECO:0000314"/>
    <property type="project" value="HPA"/>
</dbReference>
<dbReference type="GO" id="GO:0005654">
    <property type="term" value="C:nucleoplasm"/>
    <property type="evidence" value="ECO:0000304"/>
    <property type="project" value="Reactome"/>
</dbReference>
<dbReference type="GO" id="GO:0000786">
    <property type="term" value="C:nucleosome"/>
    <property type="evidence" value="ECO:0007669"/>
    <property type="project" value="InterPro"/>
</dbReference>
<dbReference type="GO" id="GO:0005634">
    <property type="term" value="C:nucleus"/>
    <property type="evidence" value="ECO:0000314"/>
    <property type="project" value="UniProtKB"/>
</dbReference>
<dbReference type="GO" id="GO:0016605">
    <property type="term" value="C:PML body"/>
    <property type="evidence" value="ECO:0000314"/>
    <property type="project" value="UniProtKB"/>
</dbReference>
<dbReference type="GO" id="GO:0016407">
    <property type="term" value="F:acetyltransferase activity"/>
    <property type="evidence" value="ECO:0000304"/>
    <property type="project" value="Reactome"/>
</dbReference>
<dbReference type="GO" id="GO:0003682">
    <property type="term" value="F:chromatin binding"/>
    <property type="evidence" value="ECO:0000318"/>
    <property type="project" value="GO_Central"/>
</dbReference>
<dbReference type="GO" id="GO:0003677">
    <property type="term" value="F:DNA binding"/>
    <property type="evidence" value="ECO:0000314"/>
    <property type="project" value="UniProtKB"/>
</dbReference>
<dbReference type="GO" id="GO:0140297">
    <property type="term" value="F:DNA-binding transcription factor binding"/>
    <property type="evidence" value="ECO:0000353"/>
    <property type="project" value="UniProtKB"/>
</dbReference>
<dbReference type="GO" id="GO:0004402">
    <property type="term" value="F:histone acetyltransferase activity"/>
    <property type="evidence" value="ECO:0000314"/>
    <property type="project" value="UniProtKB"/>
</dbReference>
<dbReference type="GO" id="GO:0010484">
    <property type="term" value="F:histone H3 acetyltransferase activity"/>
    <property type="evidence" value="ECO:0000318"/>
    <property type="project" value="GO_Central"/>
</dbReference>
<dbReference type="GO" id="GO:0036408">
    <property type="term" value="F:histone H3K14 acetyltransferase activity"/>
    <property type="evidence" value="ECO:0000314"/>
    <property type="project" value="UniProtKB"/>
</dbReference>
<dbReference type="GO" id="GO:0043997">
    <property type="term" value="F:histone H4K12 acetyltransferase activity"/>
    <property type="evidence" value="ECO:0000314"/>
    <property type="project" value="UniProtKB"/>
</dbReference>
<dbReference type="GO" id="GO:0046972">
    <property type="term" value="F:histone H4K16 acetyltransferase activity"/>
    <property type="evidence" value="ECO:0000314"/>
    <property type="project" value="UniProtKB"/>
</dbReference>
<dbReference type="GO" id="GO:0043995">
    <property type="term" value="F:histone H4K5 acetyltransferase activity"/>
    <property type="evidence" value="ECO:0000314"/>
    <property type="project" value="UniProtKB"/>
</dbReference>
<dbReference type="GO" id="GO:0043996">
    <property type="term" value="F:histone H4K8 acetyltransferase activity"/>
    <property type="evidence" value="ECO:0000314"/>
    <property type="project" value="UniProtKB"/>
</dbReference>
<dbReference type="GO" id="GO:0003713">
    <property type="term" value="F:transcription coactivator activity"/>
    <property type="evidence" value="ECO:0000314"/>
    <property type="project" value="UniProtKB"/>
</dbReference>
<dbReference type="GO" id="GO:0003712">
    <property type="term" value="F:transcription coregulator activity"/>
    <property type="evidence" value="ECO:0000318"/>
    <property type="project" value="GO_Central"/>
</dbReference>
<dbReference type="GO" id="GO:0008270">
    <property type="term" value="F:zinc ion binding"/>
    <property type="evidence" value="ECO:0000314"/>
    <property type="project" value="UniProtKB"/>
</dbReference>
<dbReference type="GO" id="GO:0090398">
    <property type="term" value="P:cellular senescence"/>
    <property type="evidence" value="ECO:0000315"/>
    <property type="project" value="UniProtKB"/>
</dbReference>
<dbReference type="GO" id="GO:0051276">
    <property type="term" value="P:chromosome organization"/>
    <property type="evidence" value="ECO:0000304"/>
    <property type="project" value="ProtInc"/>
</dbReference>
<dbReference type="GO" id="GO:0030099">
    <property type="term" value="P:myeloid cell differentiation"/>
    <property type="evidence" value="ECO:0000314"/>
    <property type="project" value="UniProtKB"/>
</dbReference>
<dbReference type="GO" id="GO:0045892">
    <property type="term" value="P:negative regulation of DNA-templated transcription"/>
    <property type="evidence" value="ECO:0000314"/>
    <property type="project" value="UniProtKB"/>
</dbReference>
<dbReference type="GO" id="GO:0006334">
    <property type="term" value="P:nucleosome assembly"/>
    <property type="evidence" value="ECO:0007669"/>
    <property type="project" value="InterPro"/>
</dbReference>
<dbReference type="GO" id="GO:0045893">
    <property type="term" value="P:positive regulation of DNA-templated transcription"/>
    <property type="evidence" value="ECO:0000314"/>
    <property type="project" value="UniProtKB"/>
</dbReference>
<dbReference type="GO" id="GO:0010628">
    <property type="term" value="P:positive regulation of gene expression"/>
    <property type="evidence" value="ECO:0007669"/>
    <property type="project" value="Ensembl"/>
</dbReference>
<dbReference type="GO" id="GO:0006473">
    <property type="term" value="P:protein acetylation"/>
    <property type="evidence" value="ECO:0000314"/>
    <property type="project" value="UniProtKB"/>
</dbReference>
<dbReference type="GO" id="GO:0050793">
    <property type="term" value="P:regulation of developmental process"/>
    <property type="evidence" value="ECO:0000303"/>
    <property type="project" value="ComplexPortal"/>
</dbReference>
<dbReference type="GO" id="GO:0006355">
    <property type="term" value="P:regulation of DNA-templated transcription"/>
    <property type="evidence" value="ECO:0000314"/>
    <property type="project" value="ComplexPortal"/>
</dbReference>
<dbReference type="GO" id="GO:1903706">
    <property type="term" value="P:regulation of hemopoiesis"/>
    <property type="evidence" value="ECO:0000303"/>
    <property type="project" value="ComplexPortal"/>
</dbReference>
<dbReference type="GO" id="GO:1901796">
    <property type="term" value="P:regulation of signal transduction by p53 class mediator"/>
    <property type="evidence" value="ECO:0000304"/>
    <property type="project" value="Reactome"/>
</dbReference>
<dbReference type="GO" id="GO:0006357">
    <property type="term" value="P:regulation of transcription by RNA polymerase II"/>
    <property type="evidence" value="ECO:0000318"/>
    <property type="project" value="GO_Central"/>
</dbReference>
<dbReference type="CDD" id="cd04301">
    <property type="entry name" value="NAT_SF"/>
    <property type="match status" value="1"/>
</dbReference>
<dbReference type="CDD" id="cd15618">
    <property type="entry name" value="PHD1_MOZ_MORF"/>
    <property type="match status" value="1"/>
</dbReference>
<dbReference type="CDD" id="cd15527">
    <property type="entry name" value="PHD2_KAT6A_6B"/>
    <property type="match status" value="1"/>
</dbReference>
<dbReference type="FunFam" id="1.10.10.10:FF:000123">
    <property type="entry name" value="Histone acetyltransferase"/>
    <property type="match status" value="1"/>
</dbReference>
<dbReference type="FunFam" id="1.10.10.10:FF:000132">
    <property type="entry name" value="Histone acetyltransferase"/>
    <property type="match status" value="1"/>
</dbReference>
<dbReference type="FunFam" id="3.30.40.10:FF:000035">
    <property type="entry name" value="Histone acetyltransferase"/>
    <property type="match status" value="1"/>
</dbReference>
<dbReference type="FunFam" id="3.30.60.60:FF:000002">
    <property type="entry name" value="Histone acetyltransferase"/>
    <property type="match status" value="1"/>
</dbReference>
<dbReference type="FunFam" id="3.40.630.30:FF:000001">
    <property type="entry name" value="Histone acetyltransferase"/>
    <property type="match status" value="1"/>
</dbReference>
<dbReference type="Gene3D" id="3.40.630.30">
    <property type="match status" value="1"/>
</dbReference>
<dbReference type="Gene3D" id="3.30.60.60">
    <property type="entry name" value="N-acetyl transferase-like"/>
    <property type="match status" value="1"/>
</dbReference>
<dbReference type="Gene3D" id="1.10.10.10">
    <property type="entry name" value="Winged helix-like DNA-binding domain superfamily/Winged helix DNA-binding domain"/>
    <property type="match status" value="2"/>
</dbReference>
<dbReference type="Gene3D" id="3.30.40.10">
    <property type="entry name" value="Zinc/RING finger domain, C3HC4 (zinc finger)"/>
    <property type="match status" value="1"/>
</dbReference>
<dbReference type="IDEAL" id="IID00489"/>
<dbReference type="InterPro" id="IPR016181">
    <property type="entry name" value="Acyl_CoA_acyltransferase"/>
</dbReference>
<dbReference type="InterPro" id="IPR002717">
    <property type="entry name" value="HAT_MYST-type"/>
</dbReference>
<dbReference type="InterPro" id="IPR005818">
    <property type="entry name" value="Histone_H1/H5_H15"/>
</dbReference>
<dbReference type="InterPro" id="IPR050603">
    <property type="entry name" value="MYST_HAT"/>
</dbReference>
<dbReference type="InterPro" id="IPR048589">
    <property type="entry name" value="SAMD1-like_WH"/>
</dbReference>
<dbReference type="InterPro" id="IPR036388">
    <property type="entry name" value="WH-like_DNA-bd_sf"/>
</dbReference>
<dbReference type="InterPro" id="IPR036390">
    <property type="entry name" value="WH_DNA-bd_sf"/>
</dbReference>
<dbReference type="InterPro" id="IPR040706">
    <property type="entry name" value="Zf-MYST"/>
</dbReference>
<dbReference type="InterPro" id="IPR011011">
    <property type="entry name" value="Znf_FYVE_PHD"/>
</dbReference>
<dbReference type="InterPro" id="IPR001965">
    <property type="entry name" value="Znf_PHD"/>
</dbReference>
<dbReference type="InterPro" id="IPR019787">
    <property type="entry name" value="Znf_PHD-finger"/>
</dbReference>
<dbReference type="InterPro" id="IPR013083">
    <property type="entry name" value="Znf_RING/FYVE/PHD"/>
</dbReference>
<dbReference type="PANTHER" id="PTHR10615">
    <property type="entry name" value="HISTONE ACETYLTRANSFERASE"/>
    <property type="match status" value="1"/>
</dbReference>
<dbReference type="PANTHER" id="PTHR10615:SF26">
    <property type="entry name" value="HISTONE ACETYLTRANSFERASE KAT6A"/>
    <property type="match status" value="1"/>
</dbReference>
<dbReference type="Pfam" id="PF01853">
    <property type="entry name" value="MOZ_SAS"/>
    <property type="match status" value="1"/>
</dbReference>
<dbReference type="Pfam" id="PF00628">
    <property type="entry name" value="PHD"/>
    <property type="match status" value="2"/>
</dbReference>
<dbReference type="Pfam" id="PF21524">
    <property type="entry name" value="SAMD1_WH"/>
    <property type="match status" value="1"/>
</dbReference>
<dbReference type="Pfam" id="PF17772">
    <property type="entry name" value="zf-MYST"/>
    <property type="match status" value="1"/>
</dbReference>
<dbReference type="SMART" id="SM00526">
    <property type="entry name" value="H15"/>
    <property type="match status" value="1"/>
</dbReference>
<dbReference type="SMART" id="SM00249">
    <property type="entry name" value="PHD"/>
    <property type="match status" value="2"/>
</dbReference>
<dbReference type="SUPFAM" id="SSF55729">
    <property type="entry name" value="Acyl-CoA N-acyltransferases (Nat)"/>
    <property type="match status" value="1"/>
</dbReference>
<dbReference type="SUPFAM" id="SSF57903">
    <property type="entry name" value="FYVE/PHD zinc finger"/>
    <property type="match status" value="2"/>
</dbReference>
<dbReference type="SUPFAM" id="SSF46785">
    <property type="entry name" value="Winged helix' DNA-binding domain"/>
    <property type="match status" value="1"/>
</dbReference>
<dbReference type="PROSITE" id="PS51504">
    <property type="entry name" value="H15"/>
    <property type="match status" value="1"/>
</dbReference>
<dbReference type="PROSITE" id="PS51726">
    <property type="entry name" value="MYST_HAT"/>
    <property type="match status" value="1"/>
</dbReference>
<dbReference type="PROSITE" id="PS52014">
    <property type="entry name" value="SAMD1_WH"/>
    <property type="match status" value="1"/>
</dbReference>
<dbReference type="PROSITE" id="PS01359">
    <property type="entry name" value="ZF_PHD_1"/>
    <property type="match status" value="1"/>
</dbReference>
<dbReference type="PROSITE" id="PS50016">
    <property type="entry name" value="ZF_PHD_2"/>
    <property type="match status" value="2"/>
</dbReference>
<accession>Q92794</accession>
<accession>Q76L81</accession>
<comment type="function">
    <text evidence="11 12 14 15 16 18">Histone acetyltransferase that acetylates lysine residues in histone H3 and histone H4 (in vitro). Component of the MOZ/MORF complex which has a histone H3 acetyltransferase activity. May act as a transcriptional coactivator for RUNX1 and RUNX2. Acetylates p53/TP53 at 'Lys-120' and 'Lys-382' and controls its transcriptional activity via association with PML.</text>
</comment>
<comment type="catalytic activity">
    <reaction evidence="10 11 16">
        <text>L-lysyl-[protein] + acetyl-CoA = N(6)-acetyl-L-lysyl-[protein] + CoA + H(+)</text>
        <dbReference type="Rhea" id="RHEA:45948"/>
        <dbReference type="Rhea" id="RHEA-COMP:9752"/>
        <dbReference type="Rhea" id="RHEA-COMP:10731"/>
        <dbReference type="ChEBI" id="CHEBI:15378"/>
        <dbReference type="ChEBI" id="CHEBI:29969"/>
        <dbReference type="ChEBI" id="CHEBI:57287"/>
        <dbReference type="ChEBI" id="CHEBI:57288"/>
        <dbReference type="ChEBI" id="CHEBI:61930"/>
        <dbReference type="EC" id="2.3.1.48"/>
    </reaction>
</comment>
<comment type="subunit">
    <text evidence="11 12 15 17 18 22">Component of the MOZ/MORF complex composed at least of ING5, KAT6A, KAT6B, MEAF6 and one of BRPF1, BRD1/BRPF2 and BRPF3. Interacts with RUNX1; phosphorylation of RUNX1 enhances the interaction. Interacts with RUNX2. Interacts with p53/TP53. Interacts with PML (isoform PML-4) and this interaction positively regulates its acetylation activity towards p53/TP53.</text>
</comment>
<comment type="interaction">
    <interactant intactId="EBI-948013">
        <id>Q92794</id>
    </interactant>
    <interactant intactId="EBI-2638616">
        <id>PRO_0000390950</id>
        <label>KMT2A</label>
        <dbReference type="UniProtKB" id="Q03164"/>
    </interactant>
    <organismsDiffer>false</organismsDiffer>
    <experiments>10</experiments>
</comment>
<comment type="interaction">
    <interactant intactId="EBI-948013">
        <id>Q92794</id>
    </interactant>
    <interactant intactId="EBI-540834">
        <id>P61964</id>
        <label>WDR5</label>
    </interactant>
    <organismsDiffer>false</organismsDiffer>
    <experiments>4</experiments>
</comment>
<comment type="subcellular location">
    <subcellularLocation>
        <location>Nucleus</location>
    </subcellularLocation>
    <subcellularLocation>
        <location>Nucleus</location>
        <location>Nucleolus</location>
    </subcellularLocation>
    <subcellularLocation>
        <location>Nucleus</location>
        <location>Nucleoplasm</location>
    </subcellularLocation>
    <subcellularLocation>
        <location>Nucleus</location>
        <location>PML body</location>
    </subcellularLocation>
    <text>Recruited into PML body after DNA damage.</text>
</comment>
<comment type="domain">
    <text evidence="10">The N-terminus is involved in transcriptional activation while the C-terminus is involved in transcriptional repression.</text>
</comment>
<comment type="PTM">
    <text evidence="3 22">Autoacetylation at Lys-604 is required for proper function (By similarity). Autoacetylated.</text>
</comment>
<comment type="PTM">
    <text evidence="11 18">Phosphorylation at Thr-369 by PKB/AKT1 inhibits its interaction with PML and negatively regulates its acetylation activity towards p53/TP53.</text>
</comment>
<comment type="disease">
    <text evidence="9 11 13 21">Chromosomal aberrations involving KAT6A may be a cause of acute myeloid leukemias. Translocation t(8;16)(p11;p13) with CREBBP (PubMed:8782817). Translocation t(8;22)(p11;q13) with EP300 (PubMed:10824998). KAT6A-CREBBP may induce leukemia by inhibiting RUNX1-mediated transcription (PubMed:11742995). Inversion inv(8)(p11;q13) generates the KAT6A-NCOA2 oncogene, which consists of the N-terminal part of KAT6A and the C-terminal part of NCOA2/TIF2. KAT6A-NCOA2 binds to CREBBP and disrupts its function in transcription activation (PubMed:12676584).</text>
</comment>
<comment type="disease">
    <text evidence="23">A chromosomal aberration involving KAT6A is a cause of therapy-related myelodysplastic syndrome. Translocation t(2;8)(p23;p11.2) with ASXL2 generates a KAT6A-ASXL2 fusion protein.</text>
</comment>
<comment type="disease" evidence="19 20">
    <disease id="DI-04351">
        <name>Arboleda-Tham syndrome</name>
        <acronym>ARTHS</acronym>
        <description>An autosomal dominant disorder characterized by intellectual disability, dysmorphic facial features, delayed psychomotor development, and lack of speech.</description>
        <dbReference type="MIM" id="616268"/>
    </disease>
    <text>The disease is caused by variants affecting the gene represented in this entry.</text>
</comment>
<comment type="similarity">
    <text evidence="24">Belongs to the MYST (SAS/MOZ) family.</text>
</comment>
<comment type="online information" name="Atlas of Genetics and Cytogenetics in Oncology and Haematology">
    <link uri="https://atlasgeneticsoncology.org/gene/25/MYST3"/>
</comment>
<evidence type="ECO:0000250" key="1">
    <source>
        <dbReference type="UniProtKB" id="Q5TKR9"/>
    </source>
</evidence>
<evidence type="ECO:0000250" key="2">
    <source>
        <dbReference type="UniProtKB" id="Q8BZ21"/>
    </source>
</evidence>
<evidence type="ECO:0000250" key="3">
    <source>
        <dbReference type="UniProtKB" id="Q9H7Z6"/>
    </source>
</evidence>
<evidence type="ECO:0000255" key="4">
    <source>
        <dbReference type="PROSITE-ProRule" id="PRU00146"/>
    </source>
</evidence>
<evidence type="ECO:0000255" key="5">
    <source>
        <dbReference type="PROSITE-ProRule" id="PRU00837"/>
    </source>
</evidence>
<evidence type="ECO:0000255" key="6">
    <source>
        <dbReference type="PROSITE-ProRule" id="PRU01063"/>
    </source>
</evidence>
<evidence type="ECO:0000255" key="7">
    <source>
        <dbReference type="PROSITE-ProRule" id="PRU01358"/>
    </source>
</evidence>
<evidence type="ECO:0000256" key="8">
    <source>
        <dbReference type="SAM" id="MobiDB-lite"/>
    </source>
</evidence>
<evidence type="ECO:0000269" key="9">
    <source>
    </source>
</evidence>
<evidence type="ECO:0000269" key="10">
    <source>
    </source>
</evidence>
<evidence type="ECO:0000269" key="11">
    <source>
    </source>
</evidence>
<evidence type="ECO:0000269" key="12">
    <source>
    </source>
</evidence>
<evidence type="ECO:0000269" key="13">
    <source>
    </source>
</evidence>
<evidence type="ECO:0000269" key="14">
    <source>
    </source>
</evidence>
<evidence type="ECO:0000269" key="15">
    <source>
    </source>
</evidence>
<evidence type="ECO:0000269" key="16">
    <source>
    </source>
</evidence>
<evidence type="ECO:0000269" key="17">
    <source>
    </source>
</evidence>
<evidence type="ECO:0000269" key="18">
    <source>
    </source>
</evidence>
<evidence type="ECO:0000269" key="19">
    <source>
    </source>
</evidence>
<evidence type="ECO:0000269" key="20">
    <source>
    </source>
</evidence>
<evidence type="ECO:0000269" key="21">
    <source>
    </source>
</evidence>
<evidence type="ECO:0000269" key="22">
    <source ref="27"/>
</evidence>
<evidence type="ECO:0000269" key="23">
    <source ref="3"/>
</evidence>
<evidence type="ECO:0000305" key="24"/>
<evidence type="ECO:0007744" key="25">
    <source>
    </source>
</evidence>
<evidence type="ECO:0007744" key="26">
    <source>
    </source>
</evidence>
<evidence type="ECO:0007744" key="27">
    <source>
    </source>
</evidence>
<evidence type="ECO:0007744" key="28">
    <source>
    </source>
</evidence>
<evidence type="ECO:0007744" key="29">
    <source>
    </source>
</evidence>
<evidence type="ECO:0007744" key="30">
    <source>
    </source>
</evidence>
<evidence type="ECO:0007829" key="31">
    <source>
        <dbReference type="PDB" id="2OZU"/>
    </source>
</evidence>
<evidence type="ECO:0007829" key="32">
    <source>
        <dbReference type="PDB" id="2RC4"/>
    </source>
</evidence>
<evidence type="ECO:0007829" key="33">
    <source>
        <dbReference type="PDB" id="4LK9"/>
    </source>
</evidence>
<evidence type="ECO:0007829" key="34">
    <source>
        <dbReference type="PDB" id="5B76"/>
    </source>
</evidence>
<evidence type="ECO:0007829" key="35">
    <source>
        <dbReference type="PDB" id="5B78"/>
    </source>
</evidence>
<evidence type="ECO:0007829" key="36">
    <source>
        <dbReference type="PDB" id="7Y43"/>
    </source>
</evidence>
<evidence type="ECO:0007829" key="37">
    <source>
        <dbReference type="PDB" id="8DD5"/>
    </source>
</evidence>
<proteinExistence type="evidence at protein level"/>
<gene>
    <name type="primary">KAT6A</name>
    <name type="synonym">MOZ</name>
    <name type="synonym">MYST3</name>
    <name type="synonym">RUNXBP2</name>
    <name type="synonym">ZNF220</name>
</gene>
<feature type="chain" id="PRO_0000051572" description="Histone acetyltransferase KAT6A">
    <location>
        <begin position="1"/>
        <end position="2004"/>
    </location>
</feature>
<feature type="domain" description="SAMD1-like winged helix (WH)" evidence="7">
    <location>
        <begin position="1"/>
        <end position="77"/>
    </location>
</feature>
<feature type="domain" description="H15" evidence="5">
    <location>
        <begin position="95"/>
        <end position="171"/>
    </location>
</feature>
<feature type="domain" description="MYST-type HAT" evidence="6">
    <location>
        <begin position="504"/>
        <end position="778"/>
    </location>
</feature>
<feature type="zinc finger region" description="PHD-type 1" evidence="4">
    <location>
        <begin position="206"/>
        <end position="265"/>
    </location>
</feature>
<feature type="zinc finger region" description="PHD-type 2" evidence="4">
    <location>
        <begin position="259"/>
        <end position="313"/>
    </location>
</feature>
<feature type="zinc finger region" description="C2HC MYST-type" evidence="6">
    <location>
        <begin position="537"/>
        <end position="562"/>
    </location>
</feature>
<feature type="region of interest" description="Required for activation of RUNX1-1">
    <location>
        <begin position="1"/>
        <end position="144"/>
    </location>
</feature>
<feature type="region of interest" description="Required for nuclear localization">
    <location>
        <begin position="52"/>
        <end position="166"/>
    </location>
</feature>
<feature type="region of interest" description="Interaction with PML" evidence="18">
    <location>
        <begin position="144"/>
        <end position="664"/>
    </location>
</feature>
<feature type="region of interest" description="Interaction with RUNX1-1">
    <location>
        <begin position="312"/>
        <end position="664"/>
    </location>
</feature>
<feature type="region of interest" description="Disordered" evidence="8">
    <location>
        <begin position="334"/>
        <end position="375"/>
    </location>
</feature>
<feature type="region of interest" description="Disordered" evidence="8">
    <location>
        <begin position="441"/>
        <end position="464"/>
    </location>
</feature>
<feature type="region of interest" description="Catalytic">
    <location>
        <begin position="488"/>
        <end position="778"/>
    </location>
</feature>
<feature type="region of interest" description="Mediates interaction with BRPF1, required for histone H3 acetyltransferase activity" evidence="17">
    <location>
        <begin position="507"/>
        <end position="810"/>
    </location>
</feature>
<feature type="region of interest" description="Disordered" evidence="8">
    <location>
        <begin position="785"/>
        <end position="1445"/>
    </location>
</feature>
<feature type="region of interest" description="Disordered" evidence="8">
    <location>
        <begin position="1461"/>
        <end position="1621"/>
    </location>
</feature>
<feature type="region of interest" description="Interaction with PML" evidence="18">
    <location>
        <begin position="1517"/>
        <end position="1741"/>
    </location>
</feature>
<feature type="region of interest" description="Interaction with RUNX1-2">
    <location>
        <begin position="1517"/>
        <end position="1642"/>
    </location>
</feature>
<feature type="region of interest" description="Disordered" evidence="8">
    <location>
        <begin position="1637"/>
        <end position="1721"/>
    </location>
</feature>
<feature type="region of interest" description="Required for activation of RUNX1-2">
    <location>
        <begin position="1913"/>
        <end position="1948"/>
    </location>
</feature>
<feature type="compositionally biased region" description="Polar residues" evidence="8">
    <location>
        <begin position="446"/>
        <end position="457"/>
    </location>
</feature>
<feature type="compositionally biased region" description="Acidic residues" evidence="8">
    <location>
        <begin position="787"/>
        <end position="803"/>
    </location>
</feature>
<feature type="compositionally biased region" description="Basic and acidic residues" evidence="8">
    <location>
        <begin position="817"/>
        <end position="836"/>
    </location>
</feature>
<feature type="compositionally biased region" description="Basic residues" evidence="8">
    <location>
        <begin position="864"/>
        <end position="873"/>
    </location>
</feature>
<feature type="compositionally biased region" description="Basic and acidic residues" evidence="8">
    <location>
        <begin position="874"/>
        <end position="888"/>
    </location>
</feature>
<feature type="compositionally biased region" description="Basic and acidic residues" evidence="8">
    <location>
        <begin position="931"/>
        <end position="942"/>
    </location>
</feature>
<feature type="compositionally biased region" description="Basic and acidic residues" evidence="8">
    <location>
        <begin position="953"/>
        <end position="980"/>
    </location>
</feature>
<feature type="compositionally biased region" description="Basic residues" evidence="8">
    <location>
        <begin position="1009"/>
        <end position="1030"/>
    </location>
</feature>
<feature type="compositionally biased region" description="Low complexity" evidence="8">
    <location>
        <begin position="1031"/>
        <end position="1042"/>
    </location>
</feature>
<feature type="compositionally biased region" description="Acidic residues" evidence="8">
    <location>
        <begin position="1043"/>
        <end position="1053"/>
    </location>
</feature>
<feature type="compositionally biased region" description="Acidic residues" evidence="8">
    <location>
        <begin position="1065"/>
        <end position="1078"/>
    </location>
</feature>
<feature type="compositionally biased region" description="Acidic residues" evidence="8">
    <location>
        <begin position="1107"/>
        <end position="1118"/>
    </location>
</feature>
<feature type="compositionally biased region" description="Basic residues" evidence="8">
    <location>
        <begin position="1146"/>
        <end position="1172"/>
    </location>
</feature>
<feature type="compositionally biased region" description="Basic and acidic residues" evidence="8">
    <location>
        <begin position="1203"/>
        <end position="1223"/>
    </location>
</feature>
<feature type="compositionally biased region" description="Acidic residues" evidence="8">
    <location>
        <begin position="1224"/>
        <end position="1245"/>
    </location>
</feature>
<feature type="compositionally biased region" description="Low complexity" evidence="8">
    <location>
        <begin position="1246"/>
        <end position="1262"/>
    </location>
</feature>
<feature type="compositionally biased region" description="Basic and acidic residues" evidence="8">
    <location>
        <begin position="1275"/>
        <end position="1287"/>
    </location>
</feature>
<feature type="compositionally biased region" description="Acidic residues" evidence="8">
    <location>
        <begin position="1288"/>
        <end position="1305"/>
    </location>
</feature>
<feature type="compositionally biased region" description="Basic and acidic residues" evidence="8">
    <location>
        <begin position="1323"/>
        <end position="1345"/>
    </location>
</feature>
<feature type="compositionally biased region" description="Basic and acidic residues" evidence="8">
    <location>
        <begin position="1358"/>
        <end position="1367"/>
    </location>
</feature>
<feature type="compositionally biased region" description="Basic and acidic residues" evidence="8">
    <location>
        <begin position="1398"/>
        <end position="1420"/>
    </location>
</feature>
<feature type="compositionally biased region" description="Low complexity" evidence="8">
    <location>
        <begin position="1481"/>
        <end position="1503"/>
    </location>
</feature>
<feature type="compositionally biased region" description="Polar residues" evidence="8">
    <location>
        <begin position="1508"/>
        <end position="1529"/>
    </location>
</feature>
<feature type="compositionally biased region" description="Low complexity" evidence="8">
    <location>
        <begin position="1534"/>
        <end position="1548"/>
    </location>
</feature>
<feature type="compositionally biased region" description="Polar residues" evidence="8">
    <location>
        <begin position="1556"/>
        <end position="1573"/>
    </location>
</feature>
<feature type="compositionally biased region" description="Low complexity" evidence="8">
    <location>
        <begin position="1574"/>
        <end position="1621"/>
    </location>
</feature>
<feature type="compositionally biased region" description="Pro residues" evidence="8">
    <location>
        <begin position="1650"/>
        <end position="1699"/>
    </location>
</feature>
<feature type="compositionally biased region" description="Polar residues" evidence="8">
    <location>
        <begin position="1702"/>
        <end position="1712"/>
    </location>
</feature>
<feature type="active site" description="Proton donor/acceptor" evidence="3">
    <location>
        <position position="680"/>
    </location>
</feature>
<feature type="binding site" evidence="22">
    <location>
        <begin position="645"/>
        <end position="649"/>
    </location>
    <ligand>
        <name>acetyl-CoA</name>
        <dbReference type="ChEBI" id="CHEBI:57288"/>
    </ligand>
</feature>
<feature type="binding site" evidence="22">
    <location>
        <begin position="654"/>
        <end position="660"/>
    </location>
    <ligand>
        <name>acetyl-CoA</name>
        <dbReference type="ChEBI" id="CHEBI:57288"/>
    </ligand>
</feature>
<feature type="binding site" evidence="22">
    <location>
        <position position="684"/>
    </location>
    <ligand>
        <name>acetyl-CoA</name>
        <dbReference type="ChEBI" id="CHEBI:57288"/>
    </ligand>
</feature>
<feature type="site" description="Breakpoint for translocation to form KAT6A-ASXL2">
    <location>
        <begin position="813"/>
        <end position="814"/>
    </location>
</feature>
<feature type="site" description="Breakpoint for translocation to form KAT6A-EP300 and KAT6A-NCOA2">
    <location>
        <begin position="1117"/>
        <end position="1118"/>
    </location>
</feature>
<feature type="site" description="Breakpoint for translocation to form KAT6A-CREBBP">
    <location>
        <begin position="1546"/>
        <end position="1547"/>
    </location>
</feature>
<feature type="modified residue" description="N6-acetyllysine" evidence="2">
    <location>
        <position position="172"/>
    </location>
</feature>
<feature type="modified residue" description="N6-acetyllysine" evidence="26">
    <location>
        <position position="350"/>
    </location>
</feature>
<feature type="modified residue" description="N6-acetyllysine" evidence="26">
    <location>
        <position position="355"/>
    </location>
</feature>
<feature type="modified residue" description="Phosphothreonine; by PKB/AKT1" evidence="18">
    <location>
        <position position="369"/>
    </location>
</feature>
<feature type="modified residue" description="Phosphoserine" evidence="29">
    <location>
        <position position="420"/>
    </location>
</feature>
<feature type="modified residue" description="Phosphoserine" evidence="28 29">
    <location>
        <position position="473"/>
    </location>
</feature>
<feature type="modified residue" description="N6-acetyllysine; by autocatalysis" evidence="22">
    <location>
        <position position="604"/>
    </location>
</feature>
<feature type="modified residue" description="Phosphoserine" evidence="2">
    <location>
        <position position="787"/>
    </location>
</feature>
<feature type="modified residue" description="Phosphoserine" evidence="29">
    <location>
        <position position="812"/>
    </location>
</feature>
<feature type="modified residue" description="N6-acetyllysine" evidence="2">
    <location>
        <position position="815"/>
    </location>
</feature>
<feature type="modified residue" description="Phosphotyrosine" evidence="1">
    <location>
        <position position="899"/>
    </location>
</feature>
<feature type="modified residue" description="Phosphoserine" evidence="29">
    <location>
        <position position="941"/>
    </location>
</feature>
<feature type="modified residue" description="Phosphoserine" evidence="29">
    <location>
        <position position="954"/>
    </location>
</feature>
<feature type="modified residue" description="Phosphoserine" evidence="29">
    <location>
        <position position="974"/>
    </location>
</feature>
<feature type="modified residue" description="N6-acetyllysine" evidence="26">
    <location>
        <position position="1007"/>
    </location>
</feature>
<feature type="modified residue" description="Phosphoserine" evidence="29">
    <location>
        <position position="1089"/>
    </location>
</feature>
<feature type="modified residue" description="Phosphoserine" evidence="29">
    <location>
        <position position="1090"/>
    </location>
</feature>
<feature type="modified residue" description="Phosphoserine" evidence="25 27 28 29">
    <location>
        <position position="1113"/>
    </location>
</feature>
<feature type="cross-link" description="Glycyl lysine isopeptide (Lys-Gly) (interchain with G-Cter in SUMO2)" evidence="30">
    <location>
        <position position="834"/>
    </location>
</feature>
<feature type="cross-link" description="Glycyl lysine isopeptide (Lys-Gly) (interchain with G-Cter in SUMO2)" evidence="30">
    <location>
        <position position="1342"/>
    </location>
</feature>
<feature type="sequence variant" id="VAR_047548" description="In dbSNP:rs3824276.">
    <original>L</original>
    <variation>S</variation>
    <location>
        <position position="134"/>
    </location>
</feature>
<feature type="mutagenesis site" description="Abrogates HAT activity." evidence="13">
    <original>C</original>
    <variation>G</variation>
    <location>
        <position position="543"/>
    </location>
</feature>
<feature type="mutagenesis site" description="Reduced affinity for DNA." evidence="16">
    <original>K</original>
    <variation>A</variation>
    <location>
        <position position="545"/>
    </location>
</feature>
<feature type="mutagenesis site" description="Abrogates HAT activity." evidence="13">
    <original>G</original>
    <variation>E</variation>
    <location>
        <position position="657"/>
    </location>
</feature>
<feature type="mutagenesis site" description="Slightly reduced affinity for DNA." evidence="16">
    <original>I</original>
    <variation>E</variation>
    <location>
        <position position="727"/>
    </location>
</feature>
<feature type="mutagenesis site" description="Reduced affinity for DNA." evidence="16">
    <original>H</original>
    <variation>D</variation>
    <location>
        <position position="732"/>
    </location>
</feature>
<feature type="sequence conflict" description="In Ref. 1; AAC50662 and 3; BAD00088." evidence="24" ref="1 3">
    <original>K</original>
    <variation>R</variation>
    <location>
        <position position="401"/>
    </location>
</feature>
<feature type="helix" evidence="36">
    <location>
        <begin position="7"/>
        <end position="22"/>
    </location>
</feature>
<feature type="helix" evidence="36">
    <location>
        <begin position="29"/>
        <end position="40"/>
    </location>
</feature>
<feature type="helix" evidence="36">
    <location>
        <begin position="44"/>
        <end position="56"/>
    </location>
</feature>
<feature type="strand" evidence="36">
    <location>
        <begin position="59"/>
        <end position="65"/>
    </location>
</feature>
<feature type="strand" evidence="36">
    <location>
        <begin position="68"/>
        <end position="73"/>
    </location>
</feature>
<feature type="helix" evidence="35">
    <location>
        <begin position="195"/>
        <end position="197"/>
    </location>
</feature>
<feature type="strand" evidence="34">
    <location>
        <begin position="198"/>
        <end position="200"/>
    </location>
</feature>
<feature type="strand" evidence="35">
    <location>
        <begin position="207"/>
        <end position="209"/>
    </location>
</feature>
<feature type="turn" evidence="35">
    <location>
        <begin position="210"/>
        <end position="212"/>
    </location>
</feature>
<feature type="turn" evidence="35">
    <location>
        <begin position="231"/>
        <end position="233"/>
    </location>
</feature>
<feature type="helix" evidence="35">
    <location>
        <begin position="239"/>
        <end position="242"/>
    </location>
</feature>
<feature type="helix" evidence="35">
    <location>
        <begin position="246"/>
        <end position="252"/>
    </location>
</feature>
<feature type="turn" evidence="35">
    <location>
        <begin position="253"/>
        <end position="256"/>
    </location>
</feature>
<feature type="turn" evidence="35">
    <location>
        <begin position="260"/>
        <end position="262"/>
    </location>
</feature>
<feature type="turn" evidence="35">
    <location>
        <begin position="266"/>
        <end position="268"/>
    </location>
</feature>
<feature type="helix" evidence="35">
    <location>
        <begin position="275"/>
        <end position="277"/>
    </location>
</feature>
<feature type="strand" evidence="33">
    <location>
        <begin position="278"/>
        <end position="280"/>
    </location>
</feature>
<feature type="turn" evidence="35">
    <location>
        <begin position="282"/>
        <end position="284"/>
    </location>
</feature>
<feature type="strand" evidence="33">
    <location>
        <begin position="287"/>
        <end position="289"/>
    </location>
</feature>
<feature type="helix" evidence="35">
    <location>
        <begin position="290"/>
        <end position="292"/>
    </location>
</feature>
<feature type="strand" evidence="35">
    <location>
        <begin position="293"/>
        <end position="295"/>
    </location>
</feature>
<feature type="turn" evidence="35">
    <location>
        <begin position="308"/>
        <end position="310"/>
    </location>
</feature>
<feature type="strand" evidence="31">
    <location>
        <begin position="511"/>
        <end position="514"/>
    </location>
</feature>
<feature type="strand" evidence="31">
    <location>
        <begin position="517"/>
        <end position="520"/>
    </location>
</feature>
<feature type="helix" evidence="37">
    <location>
        <begin position="529"/>
        <end position="533"/>
    </location>
</feature>
<feature type="strand" evidence="31">
    <location>
        <begin position="535"/>
        <end position="539"/>
    </location>
</feature>
<feature type="turn" evidence="31">
    <location>
        <begin position="541"/>
        <end position="543"/>
    </location>
</feature>
<feature type="strand" evidence="31">
    <location>
        <begin position="546"/>
        <end position="549"/>
    </location>
</feature>
<feature type="helix" evidence="31">
    <location>
        <begin position="550"/>
        <end position="559"/>
    </location>
</feature>
<feature type="strand" evidence="31">
    <location>
        <begin position="566"/>
        <end position="573"/>
    </location>
</feature>
<feature type="strand" evidence="31">
    <location>
        <begin position="576"/>
        <end position="582"/>
    </location>
</feature>
<feature type="turn" evidence="31">
    <location>
        <begin position="583"/>
        <end position="585"/>
    </location>
</feature>
<feature type="helix" evidence="31">
    <location>
        <begin position="587"/>
        <end position="598"/>
    </location>
</feature>
<feature type="strand" evidence="31">
    <location>
        <begin position="613"/>
        <end position="622"/>
    </location>
</feature>
<feature type="strand" evidence="31">
    <location>
        <begin position="625"/>
        <end position="637"/>
    </location>
</feature>
<feature type="strand" evidence="31">
    <location>
        <begin position="642"/>
        <end position="649"/>
    </location>
</feature>
<feature type="helix" evidence="31">
    <location>
        <begin position="651"/>
        <end position="653"/>
    </location>
</feature>
<feature type="strand" evidence="32">
    <location>
        <begin position="655"/>
        <end position="657"/>
    </location>
</feature>
<feature type="helix" evidence="31">
    <location>
        <begin position="658"/>
        <end position="672"/>
    </location>
</feature>
<feature type="strand" evidence="31">
    <location>
        <begin position="677"/>
        <end position="679"/>
    </location>
</feature>
<feature type="helix" evidence="31">
    <location>
        <begin position="685"/>
        <end position="705"/>
    </location>
</feature>
<feature type="helix" evidence="31">
    <location>
        <begin position="713"/>
        <end position="720"/>
    </location>
</feature>
<feature type="helix" evidence="31">
    <location>
        <begin position="724"/>
        <end position="733"/>
    </location>
</feature>
<feature type="strand" evidence="37">
    <location>
        <begin position="737"/>
        <end position="742"/>
    </location>
</feature>
<feature type="strand" evidence="37">
    <location>
        <begin position="744"/>
        <end position="746"/>
    </location>
</feature>
<feature type="helix" evidence="31">
    <location>
        <begin position="750"/>
        <end position="759"/>
    </location>
</feature>
<feature type="helix" evidence="31">
    <location>
        <begin position="771"/>
        <end position="773"/>
    </location>
</feature>
<keyword id="KW-0002">3D-structure</keyword>
<keyword id="KW-0007">Acetylation</keyword>
<keyword id="KW-0010">Activator</keyword>
<keyword id="KW-0012">Acyltransferase</keyword>
<keyword id="KW-0156">Chromatin regulator</keyword>
<keyword id="KW-0160">Chromosomal rearrangement</keyword>
<keyword id="KW-0991">Intellectual disability</keyword>
<keyword id="KW-1017">Isopeptide bond</keyword>
<keyword id="KW-0479">Metal-binding</keyword>
<keyword id="KW-0539">Nucleus</keyword>
<keyword id="KW-0597">Phosphoprotein</keyword>
<keyword id="KW-1267">Proteomics identification</keyword>
<keyword id="KW-0656">Proto-oncogene</keyword>
<keyword id="KW-1185">Reference proteome</keyword>
<keyword id="KW-0677">Repeat</keyword>
<keyword id="KW-0678">Repressor</keyword>
<keyword id="KW-0804">Transcription</keyword>
<keyword id="KW-0805">Transcription regulation</keyword>
<keyword id="KW-0808">Transferase</keyword>
<keyword id="KW-0832">Ubl conjugation</keyword>
<keyword id="KW-0862">Zinc</keyword>
<keyword id="KW-0863">Zinc-finger</keyword>
<sequence>MVKLANPLYTEWILEAIKKVKKQKQRPSEERICNAVSSSHGLDRKTVLEQLELSVKDGTILKVSNKGLNSYKDPDNPGRIALPKPRNHGKLDNKQNVDWNKLIKRAVEGLAESGGSTLKSIERFLKGQKDVSALFGGSAASGFHQQLRLAIKRAIGHGRLLKDGPLYRLNTKATNVDGKESCESLSCLPPVSLLPHEKDKPVAEPIPICSFCLGTKEQNREKKPEELISCADCGNSGHPSCLKFSPELTVRVKALRWQCIECKTCSSCRDQGKNADNMLFCDSCDRGFHMECCDPPLTRMPKGMWICQICRPRKKGRKLLQKKAAQIKRRYTNPIGRPKNRLKKQNTVSKGPFSKVRTGPGRGRKRKITLSSQSASSSSEEGYLERIDGLDFCRDSNVSLKFNKKTKGLIDGLTKFFTPSPDGRKARGEVVDYSEQYRIRKRGNRKSSTSDWPTDNQDGWDGKQENEERLFGSQEIMTEKDMELFRDIQEQALQKVGVTGPPDPQVRCPSVIEFGKYEIHTWYSSPYPQEYSRLPKLYLCEFCLKYMKSRTILQQHMKKCGWFHPPANEIYRKNNISVFEVDGNVSTIYCQNLCLLAKLFLDHKTLYYDVEPFLFYVLTQNDVKGCHLVGYFSKEKHCQQKYNVSCIMILPQYQRKGYGRFLIDFSYLLSKREGQAGSPEKPLSDLGRLSYMAYWKSVILECLYHQNDKQISIKKLSKLTGICPQDITSTLHHLRMLDFRSDQFVIIRREKLIQDHMAKLQLNLRPVDVDPECLRWTPVIVSNSVVSEEEEEEAEEGENEEPQCQERELEISVGKSVSHENKEQDSYSVESEKKPEVMAPVSSTRLSKQVLPHDSLPANSQPSRRGRWGRKNRKTQERFGDKDSKLLLEETSSAPQEQYGECGEKSEATQEQYTESEEQLVASEEQPSQDGKPDLPKRRLSEGVEPWRGQLKKSPEALKCRLTEGSERLPRRYSEGDRAVLRGFSESSEEEEEPESPRSSSPPILTKPTLKRKKPFLHRRRRVRKRKHHNSSVVTETISETTEVLDEPFEDSDSERPMPRLEPTFEIDEEEEEEDENELFPREYFRRLSSQDVLRCQSSSKRKSKDEEEDEESDDADDTPILKPVSLLRKRDVKNSPLEPDTSTPLKKKKGWPKGKSRKPIHWKKRPGRKPGFKLSREIMPVSTQACVIEPIVSIPKAGRKPKIQESEETVEPKEDMPLPEERKEEEEMQAEAEEAEEGEEEDAASSEVPAASPADSSNSPETETKEPEVEEEEEKPRVSEEQRQSEEEQQELEEPEPEEEEDAAAETAQNDDHDADDEDDGHLESTKKKELEEQPTREDVKEEPGVQESFLDANMQKSREKIKDKEETELDSEEEQPSHDTSVVSEQMAGSEDDHEEDSHTKEELIELKEEEEIPHSELDLETVQAVQSLTQEESSEHEGAYQDCEETLAACQTLQSYTQADEDPQMSMVEDCHASEHNSPISSVQSHPSQSVRSVSSPNVPALESGYTQISPEQGSLSAPSMQNMETSPMMDVPSVSDHSQQVVDSGFSDLGSIESTTENYENPSSYDSTMGGSICGNSSSQSSCSYGGLSSSSSLTQSSCVVTQQMASMGSSCSMMQQSSVQPAANCSIKSPQSCVVERPPSNQQQQPPPPPPQQPQPPPPQPQPAPQPPPPQQQPQQQPQPQPQQPPPPPPPQQQPPLSQCSMNNSFTPAPMIMEIPESGSTGNISIYERIPGDFGAGSYSQPSATFSLAKLQQLTNTIMDPHAMPYSHSPAVTSYATSVSLSNTGLAQLAPSHPLAGTPQAQATMTPPPNLASTTMNLTSPLLQCNMSATNIGIPHTQRLQGQMPVKGHISIRSKSAPLPSAAAHQQQLYGRSPSAVAMQAGPRALAVQRGMNMGVNLMPTPAYNVNSMNMNTLNAMNSYRMTQPMMNSSYHSNPAYMNQTAQYPMQMQMGMMGSQAYTQQPMQPNPHGNMMYTGPSHHSYMNAAGVPKQSLNGPYMRR</sequence>
<protein>
    <recommendedName>
        <fullName>Histone acetyltransferase KAT6A</fullName>
        <ecNumber evidence="10 11">2.3.1.48</ecNumber>
    </recommendedName>
    <alternativeName>
        <fullName>MOZ, YBF2/SAS3, SAS2 and TIP60 protein 3</fullName>
        <shortName>MYST-3</shortName>
    </alternativeName>
    <alternativeName>
        <fullName>Monocytic leukemia zinc finger protein</fullName>
    </alternativeName>
    <alternativeName>
        <fullName>Runt-related transcription factor-binding protein 2</fullName>
    </alternativeName>
    <alternativeName>
        <fullName>Zinc finger protein 220</fullName>
    </alternativeName>
</protein>
<organism>
    <name type="scientific">Homo sapiens</name>
    <name type="common">Human</name>
    <dbReference type="NCBI Taxonomy" id="9606"/>
    <lineage>
        <taxon>Eukaryota</taxon>
        <taxon>Metazoa</taxon>
        <taxon>Chordata</taxon>
        <taxon>Craniata</taxon>
        <taxon>Vertebrata</taxon>
        <taxon>Euteleostomi</taxon>
        <taxon>Mammalia</taxon>
        <taxon>Eutheria</taxon>
        <taxon>Euarchontoglires</taxon>
        <taxon>Primates</taxon>
        <taxon>Haplorrhini</taxon>
        <taxon>Catarrhini</taxon>
        <taxon>Hominidae</taxon>
        <taxon>Homo</taxon>
    </lineage>
</organism>